<dbReference type="EC" id="2.1.1.-" evidence="6"/>
<dbReference type="EMBL" id="BR001648">
    <property type="protein sequence ID" value="FAA01298.1"/>
    <property type="molecule type" value="Genomic_DNA"/>
</dbReference>
<dbReference type="EMBL" id="KZ825234">
    <property type="protein sequence ID" value="PYI13687.1"/>
    <property type="molecule type" value="Genomic_DNA"/>
</dbReference>
<dbReference type="SMR" id="A0A2V5HP22"/>
<dbReference type="STRING" id="1450538.A0A2V5HP22"/>
<dbReference type="OMA" id="DHYCVRI"/>
<dbReference type="Proteomes" id="UP000249829">
    <property type="component" value="Unassembled WGS sequence"/>
</dbReference>
<dbReference type="GO" id="GO:0008171">
    <property type="term" value="F:O-methyltransferase activity"/>
    <property type="evidence" value="ECO:0007669"/>
    <property type="project" value="InterPro"/>
</dbReference>
<dbReference type="GO" id="GO:0032259">
    <property type="term" value="P:methylation"/>
    <property type="evidence" value="ECO:0007669"/>
    <property type="project" value="UniProtKB-KW"/>
</dbReference>
<dbReference type="GO" id="GO:0044550">
    <property type="term" value="P:secondary metabolite biosynthetic process"/>
    <property type="evidence" value="ECO:0007669"/>
    <property type="project" value="UniProtKB-ARBA"/>
</dbReference>
<dbReference type="CDD" id="cd02440">
    <property type="entry name" value="AdoMet_MTases"/>
    <property type="match status" value="1"/>
</dbReference>
<dbReference type="Gene3D" id="3.40.50.150">
    <property type="entry name" value="Vaccinia Virus protein VP39"/>
    <property type="match status" value="1"/>
</dbReference>
<dbReference type="Gene3D" id="1.10.10.10">
    <property type="entry name" value="Winged helix-like DNA-binding domain superfamily/Winged helix DNA-binding domain"/>
    <property type="match status" value="1"/>
</dbReference>
<dbReference type="InterPro" id="IPR016461">
    <property type="entry name" value="COMT-like"/>
</dbReference>
<dbReference type="InterPro" id="IPR001077">
    <property type="entry name" value="O_MeTrfase_dom"/>
</dbReference>
<dbReference type="InterPro" id="IPR029063">
    <property type="entry name" value="SAM-dependent_MTases_sf"/>
</dbReference>
<dbReference type="InterPro" id="IPR036388">
    <property type="entry name" value="WH-like_DNA-bd_sf"/>
</dbReference>
<dbReference type="InterPro" id="IPR036390">
    <property type="entry name" value="WH_DNA-bd_sf"/>
</dbReference>
<dbReference type="PANTHER" id="PTHR43712">
    <property type="entry name" value="PUTATIVE (AFU_ORTHOLOGUE AFUA_4G14580)-RELATED"/>
    <property type="match status" value="1"/>
</dbReference>
<dbReference type="PANTHER" id="PTHR43712:SF12">
    <property type="entry name" value="STERIGMATOCYSTIN 8-O-METHYLTRANSFERASE"/>
    <property type="match status" value="1"/>
</dbReference>
<dbReference type="Pfam" id="PF00891">
    <property type="entry name" value="Methyltransf_2"/>
    <property type="match status" value="1"/>
</dbReference>
<dbReference type="SUPFAM" id="SSF53335">
    <property type="entry name" value="S-adenosyl-L-methionine-dependent methyltransferases"/>
    <property type="match status" value="1"/>
</dbReference>
<dbReference type="SUPFAM" id="SSF46785">
    <property type="entry name" value="Winged helix' DNA-binding domain"/>
    <property type="match status" value="1"/>
</dbReference>
<dbReference type="PROSITE" id="PS51683">
    <property type="entry name" value="SAM_OMT_II"/>
    <property type="match status" value="1"/>
</dbReference>
<keyword id="KW-0489">Methyltransferase</keyword>
<keyword id="KW-1185">Reference proteome</keyword>
<keyword id="KW-0949">S-adenosyl-L-methionine</keyword>
<keyword id="KW-0808">Transferase</keyword>
<protein>
    <recommendedName>
        <fullName evidence="4">O-methyltransferase pyvH</fullName>
        <ecNumber evidence="6">2.1.1.-</ecNumber>
    </recommendedName>
    <alternativeName>
        <fullName evidence="4">Pyranoviolin A biosynthesis cluster protein H</fullName>
    </alternativeName>
</protein>
<reference key="1">
    <citation type="journal article" date="2020" name="Front. Microbiol.">
        <title>Discovery of pyranoviolin A and its biosynthetic gene cluster in Aspergillus violaceofuscus.</title>
        <authorList>
            <person name="Wei X."/>
            <person name="Chen L."/>
            <person name="Tang J.W."/>
            <person name="Matsuda Y."/>
        </authorList>
    </citation>
    <scope>NUCLEOTIDE SEQUENCE [GENOMIC DNA]</scope>
    <scope>FUNCTION</scope>
    <scope>PATHWAY</scope>
</reference>
<reference key="2">
    <citation type="submission" date="2018-02" db="EMBL/GenBank/DDBJ databases">
        <title>The genomes of Aspergillus section Nigri reveals drivers in fungal speciation.</title>
        <authorList>
            <consortium name="DOE Joint Genome Institute"/>
            <person name="Vesth T.C."/>
            <person name="Nybo J."/>
            <person name="Theobald S."/>
            <person name="Brandl J."/>
            <person name="Frisvad J.C."/>
            <person name="Nielsen K.F."/>
            <person name="Lyhne E.K."/>
            <person name="Kogle M.E."/>
            <person name="Kuo A."/>
            <person name="Riley R."/>
            <person name="Clum A."/>
            <person name="Nolan M."/>
            <person name="Lipzen A."/>
            <person name="Salamov A."/>
            <person name="Henrissat B."/>
            <person name="Wiebenga A."/>
            <person name="De vries R.P."/>
            <person name="Grigoriev I.V."/>
            <person name="Mortensen U.H."/>
            <person name="Andersen M.R."/>
            <person name="Baker S.E."/>
        </authorList>
    </citation>
    <scope>NUCLEOTIDE SEQUENCE [LARGE SCALE GENOMIC DNA]</scope>
    <source>
        <strain>CBS 115571</strain>
    </source>
</reference>
<organism>
    <name type="scientific">Aspergillus violaceofuscus (strain CBS 115571)</name>
    <dbReference type="NCBI Taxonomy" id="1450538"/>
    <lineage>
        <taxon>Eukaryota</taxon>
        <taxon>Fungi</taxon>
        <taxon>Dikarya</taxon>
        <taxon>Ascomycota</taxon>
        <taxon>Pezizomycotina</taxon>
        <taxon>Eurotiomycetes</taxon>
        <taxon>Eurotiomycetidae</taxon>
        <taxon>Eurotiales</taxon>
        <taxon>Aspergillaceae</taxon>
        <taxon>Aspergillus</taxon>
    </lineage>
</organism>
<name>PYVH_ASPV1</name>
<sequence length="426" mass="47949">MASSRIVELATRISENTAIVDAYLRENQLPSPSFDEDGPVDFAIQGEEVKKAHEEAIALSWELHRLLLGPSHFLRPVPNGLSLQAISKHDIATKVPVHGKISYAALAQQCGLSEINTRRFVRYAIVHHRVFCEPQPGYVAHSAASRLLAEDPVMRDVLSHYLEECFPSFAMTLRAIDQFQDNGEPNQTGWNLYHETQDAPWDYYETHPAMARRFASTMAYETEREGRSSNVLVEGYAWTSLLAETTATTTSPLVVDVGGSRGKTALEIAHAHPELTLLVQDLPSMIEGARDQLPAIPARERVQFMAHDFFAPQLVPADAYILRHVFHNWSDRNAVRILRALVPSLQPGARLIVNDYIAPVPGVLSLAKEQRLREMDLIMLTLCNAYEREEQDWKRLFQEADPRFHVRTMSVPKGATEGILEVIWEG</sequence>
<accession>A0A2V5HP22</accession>
<accession>A0A7M4B3T0</accession>
<gene>
    <name evidence="4" type="primary">pyvH</name>
    <name type="ORF">BO99DRAFT_447468</name>
</gene>
<evidence type="ECO:0000250" key="1">
    <source>
        <dbReference type="UniProtKB" id="O04385"/>
    </source>
</evidence>
<evidence type="ECO:0000255" key="2">
    <source>
        <dbReference type="PROSITE-ProRule" id="PRU01020"/>
    </source>
</evidence>
<evidence type="ECO:0000269" key="3">
    <source>
    </source>
</evidence>
<evidence type="ECO:0000303" key="4">
    <source>
    </source>
</evidence>
<evidence type="ECO:0000305" key="5"/>
<evidence type="ECO:0000305" key="6">
    <source>
    </source>
</evidence>
<comment type="function">
    <text evidence="3 6">O-methyltransferase; part of the gene cluster that mediates the biosynthesis of pyranoviolin A, a pyranonigrin analog with a C-3 methoxy group (PubMed:33117309). Initially, the PKS portion of pyvA synthesizes C-10 carbon chain from 5 molecules of malonyl-CoA, which is then condensed with the thiolation (T) domain-bound glycine activated by the adenylation (A) domain (PubMed:33117309). The subsequent chain release by Dieckmann condensation (DKC) could be catalyzed by the TE domain present at the C-terminus of pyvA and/or the alpha/beta hydrolase pyvD, installing the tetramic acid moiety (Probable). The FAD-dependent monooxygenase pyvC next epoxidizes one of the olefins of the polyketide part, and the epoxide ring-opening induces the dihydro-gamma-pyrone ring formation (Probable). The cytochrome P450 monooxygeanse pyvB would be responsible for the 2 consecutive reactions, in which the dihydro-gamma-pyrone is oxidized to gamma-pyrone and C-7 is hydroxylated to yield pyranonigrin F (Probable). Finally, the O-methyltransferase pyvH methylates the C-3 hydroxy group to complete the biosynthesis (Probable).</text>
</comment>
<comment type="pathway">
    <text evidence="6">Secondary metabolite biosynthesis.</text>
</comment>
<comment type="similarity">
    <text evidence="5">Belongs to the class I-like SAM-binding methyltransferase superfamily. Cation-independent O-methyltransferase family.</text>
</comment>
<proteinExistence type="inferred from homology"/>
<feature type="chain" id="PRO_0000452822" description="O-methyltransferase pyvH">
    <location>
        <begin position="1"/>
        <end position="426"/>
    </location>
</feature>
<feature type="active site" description="Proton acceptor" evidence="2">
    <location>
        <position position="327"/>
    </location>
</feature>
<feature type="binding site" evidence="1">
    <location>
        <begin position="258"/>
        <end position="259"/>
    </location>
    <ligand>
        <name>S-adenosyl-L-methionine</name>
        <dbReference type="ChEBI" id="CHEBI:59789"/>
    </ligand>
</feature>
<feature type="binding site" evidence="2">
    <location>
        <position position="281"/>
    </location>
    <ligand>
        <name>S-adenosyl-L-methionine</name>
        <dbReference type="ChEBI" id="CHEBI:59789"/>
    </ligand>
</feature>
<feature type="binding site" evidence="1">
    <location>
        <begin position="308"/>
        <end position="309"/>
    </location>
    <ligand>
        <name>S-adenosyl-L-methionine</name>
        <dbReference type="ChEBI" id="CHEBI:59789"/>
    </ligand>
</feature>
<feature type="binding site" evidence="1">
    <location>
        <position position="323"/>
    </location>
    <ligand>
        <name>S-adenosyl-L-methionine</name>
        <dbReference type="ChEBI" id="CHEBI:59789"/>
    </ligand>
</feature>